<reference key="1">
    <citation type="journal article" date="2007" name="J. Bacteriol.">
        <title>The complete genome sequence of Campylobacter jejuni strain 81116 (NCTC11828).</title>
        <authorList>
            <person name="Pearson B.M."/>
            <person name="Gaskin D.J.H."/>
            <person name="Segers R.P.A.M."/>
            <person name="Wells J.M."/>
            <person name="Nuijten P.J.M."/>
            <person name="van Vliet A.H.M."/>
        </authorList>
    </citation>
    <scope>NUCLEOTIDE SEQUENCE [LARGE SCALE GENOMIC DNA]</scope>
    <source>
        <strain>81116 / NCTC 11828</strain>
    </source>
</reference>
<feature type="chain" id="PRO_1000147287" description="Nucleotide-binding protein C8J_0350">
    <location>
        <begin position="1"/>
        <end position="163"/>
    </location>
</feature>
<proteinExistence type="inferred from homology"/>
<dbReference type="EMBL" id="CP000814">
    <property type="protein sequence ID" value="ABV51949.1"/>
    <property type="molecule type" value="Genomic_DNA"/>
</dbReference>
<dbReference type="RefSeq" id="WP_002873362.1">
    <property type="nucleotide sequence ID" value="NC_009839.1"/>
</dbReference>
<dbReference type="SMR" id="A8FKG2"/>
<dbReference type="KEGG" id="cju:C8J_0350"/>
<dbReference type="HOGENOM" id="CLU_099839_1_0_7"/>
<dbReference type="GO" id="GO:0005829">
    <property type="term" value="C:cytosol"/>
    <property type="evidence" value="ECO:0007669"/>
    <property type="project" value="TreeGrafter"/>
</dbReference>
<dbReference type="GO" id="GO:0000166">
    <property type="term" value="F:nucleotide binding"/>
    <property type="evidence" value="ECO:0007669"/>
    <property type="project" value="TreeGrafter"/>
</dbReference>
<dbReference type="CDD" id="cd11740">
    <property type="entry name" value="YajQ_like"/>
    <property type="match status" value="1"/>
</dbReference>
<dbReference type="Gene3D" id="3.30.70.860">
    <property type="match status" value="1"/>
</dbReference>
<dbReference type="Gene3D" id="3.30.70.990">
    <property type="entry name" value="YajQ-like, domain 2"/>
    <property type="match status" value="1"/>
</dbReference>
<dbReference type="HAMAP" id="MF_00632">
    <property type="entry name" value="YajQ"/>
    <property type="match status" value="1"/>
</dbReference>
<dbReference type="InterPro" id="IPR007551">
    <property type="entry name" value="DUF520"/>
</dbReference>
<dbReference type="InterPro" id="IPR035571">
    <property type="entry name" value="UPF0234-like_C"/>
</dbReference>
<dbReference type="InterPro" id="IPR035570">
    <property type="entry name" value="UPF0234_N"/>
</dbReference>
<dbReference type="InterPro" id="IPR036183">
    <property type="entry name" value="YajQ-like_sf"/>
</dbReference>
<dbReference type="NCBIfam" id="NF003819">
    <property type="entry name" value="PRK05412.1"/>
    <property type="match status" value="1"/>
</dbReference>
<dbReference type="PANTHER" id="PTHR30476">
    <property type="entry name" value="UPF0234 PROTEIN YAJQ"/>
    <property type="match status" value="1"/>
</dbReference>
<dbReference type="PANTHER" id="PTHR30476:SF0">
    <property type="entry name" value="UPF0234 PROTEIN YAJQ"/>
    <property type="match status" value="1"/>
</dbReference>
<dbReference type="Pfam" id="PF04461">
    <property type="entry name" value="DUF520"/>
    <property type="match status" value="1"/>
</dbReference>
<dbReference type="SUPFAM" id="SSF89963">
    <property type="entry name" value="YajQ-like"/>
    <property type="match status" value="2"/>
</dbReference>
<comment type="function">
    <text evidence="1">Nucleotide-binding protein.</text>
</comment>
<comment type="similarity">
    <text evidence="1">Belongs to the YajQ family.</text>
</comment>
<protein>
    <recommendedName>
        <fullName evidence="1">Nucleotide-binding protein C8J_0350</fullName>
    </recommendedName>
</protein>
<gene>
    <name type="ordered locus">C8J_0350</name>
</gene>
<organism>
    <name type="scientific">Campylobacter jejuni subsp. jejuni serotype O:6 (strain 81116 / NCTC 11828)</name>
    <dbReference type="NCBI Taxonomy" id="407148"/>
    <lineage>
        <taxon>Bacteria</taxon>
        <taxon>Pseudomonadati</taxon>
        <taxon>Campylobacterota</taxon>
        <taxon>Epsilonproteobacteria</taxon>
        <taxon>Campylobacterales</taxon>
        <taxon>Campylobacteraceae</taxon>
        <taxon>Campylobacter</taxon>
    </lineage>
</organism>
<name>Y350_CAMJ8</name>
<accession>A8FKG2</accession>
<keyword id="KW-0547">Nucleotide-binding</keyword>
<evidence type="ECO:0000255" key="1">
    <source>
        <dbReference type="HAMAP-Rule" id="MF_00632"/>
    </source>
</evidence>
<sequence length="163" mass="18279">MASEHSFDISAALDKQELKNAFEQAKKELDSRYDLKGIKCEIDLSEKESIFKLSSSSEGKLDVLKDIVISKLIKRGINPNAIKELSRESGAMFRLNLKANDAIDSENAKKINKAIKDSKLKVNSSIRGEEIRVAAKQIDDLQAVMKLVKELDLELNISFKNLK</sequence>